<protein>
    <recommendedName>
        <fullName evidence="1">Probable 5-dehydro-4-deoxyglucarate dehydratase</fullName>
        <ecNumber evidence="1">4.2.1.41</ecNumber>
    </recommendedName>
    <alternativeName>
        <fullName evidence="1">5-keto-4-deoxy-glucarate dehydratase</fullName>
        <shortName evidence="1">KDGDH</shortName>
    </alternativeName>
</protein>
<feature type="chain" id="PRO_1000132272" description="Probable 5-dehydro-4-deoxyglucarate dehydratase">
    <location>
        <begin position="1"/>
        <end position="303"/>
    </location>
</feature>
<dbReference type="EC" id="4.2.1.41" evidence="1"/>
<dbReference type="EMBL" id="CP000949">
    <property type="protein sequence ID" value="ACA73306.1"/>
    <property type="molecule type" value="Genomic_DNA"/>
</dbReference>
<dbReference type="SMR" id="B1J9C7"/>
<dbReference type="STRING" id="390235.PputW619_2814"/>
<dbReference type="KEGG" id="ppw:PputW619_2814"/>
<dbReference type="eggNOG" id="COG0329">
    <property type="taxonomic scope" value="Bacteria"/>
</dbReference>
<dbReference type="HOGENOM" id="CLU_049343_5_2_6"/>
<dbReference type="OrthoDB" id="8995637at2"/>
<dbReference type="UniPathway" id="UPA00564">
    <property type="reaction ID" value="UER00628"/>
</dbReference>
<dbReference type="GO" id="GO:0008840">
    <property type="term" value="F:4-hydroxy-tetrahydrodipicolinate synthase activity"/>
    <property type="evidence" value="ECO:0007669"/>
    <property type="project" value="TreeGrafter"/>
</dbReference>
<dbReference type="GO" id="GO:0047448">
    <property type="term" value="F:5-dehydro-4-deoxyglucarate dehydratase activity"/>
    <property type="evidence" value="ECO:0007669"/>
    <property type="project" value="UniProtKB-UniRule"/>
</dbReference>
<dbReference type="GO" id="GO:0042838">
    <property type="term" value="P:D-glucarate catabolic process"/>
    <property type="evidence" value="ECO:0007669"/>
    <property type="project" value="UniProtKB-UniRule"/>
</dbReference>
<dbReference type="CDD" id="cd00951">
    <property type="entry name" value="KDGDH"/>
    <property type="match status" value="1"/>
</dbReference>
<dbReference type="Gene3D" id="3.20.20.70">
    <property type="entry name" value="Aldolase class I"/>
    <property type="match status" value="1"/>
</dbReference>
<dbReference type="HAMAP" id="MF_00694">
    <property type="entry name" value="KDGDH"/>
    <property type="match status" value="1"/>
</dbReference>
<dbReference type="InterPro" id="IPR013785">
    <property type="entry name" value="Aldolase_TIM"/>
</dbReference>
<dbReference type="InterPro" id="IPR002220">
    <property type="entry name" value="DapA-like"/>
</dbReference>
<dbReference type="InterPro" id="IPR017655">
    <property type="entry name" value="Dehydro-deoxyglucarate_dehyd"/>
</dbReference>
<dbReference type="NCBIfam" id="TIGR03249">
    <property type="entry name" value="KdgD"/>
    <property type="match status" value="1"/>
</dbReference>
<dbReference type="NCBIfam" id="NF002958">
    <property type="entry name" value="PRK03620.1"/>
    <property type="match status" value="1"/>
</dbReference>
<dbReference type="PANTHER" id="PTHR12128:SF19">
    <property type="entry name" value="5-DEHYDRO-4-DEOXYGLUCARATE DEHYDRATASE 2-RELATED"/>
    <property type="match status" value="1"/>
</dbReference>
<dbReference type="PANTHER" id="PTHR12128">
    <property type="entry name" value="DIHYDRODIPICOLINATE SYNTHASE"/>
    <property type="match status" value="1"/>
</dbReference>
<dbReference type="Pfam" id="PF00701">
    <property type="entry name" value="DHDPS"/>
    <property type="match status" value="1"/>
</dbReference>
<dbReference type="PIRSF" id="PIRSF001365">
    <property type="entry name" value="DHDPS"/>
    <property type="match status" value="1"/>
</dbReference>
<dbReference type="SMART" id="SM01130">
    <property type="entry name" value="DHDPS"/>
    <property type="match status" value="1"/>
</dbReference>
<dbReference type="SUPFAM" id="SSF51569">
    <property type="entry name" value="Aldolase"/>
    <property type="match status" value="1"/>
</dbReference>
<name>KDGD_PSEPW</name>
<gene>
    <name type="ordered locus">PputW619_2814</name>
</gene>
<proteinExistence type="inferred from homology"/>
<organism>
    <name type="scientific">Pseudomonas putida (strain W619)</name>
    <dbReference type="NCBI Taxonomy" id="390235"/>
    <lineage>
        <taxon>Bacteria</taxon>
        <taxon>Pseudomonadati</taxon>
        <taxon>Pseudomonadota</taxon>
        <taxon>Gammaproteobacteria</taxon>
        <taxon>Pseudomonadales</taxon>
        <taxon>Pseudomonadaceae</taxon>
        <taxon>Pseudomonas</taxon>
    </lineage>
</organism>
<comment type="catalytic activity">
    <reaction evidence="1">
        <text>5-dehydro-4-deoxy-D-glucarate + H(+) = 2,5-dioxopentanoate + CO2 + H2O</text>
        <dbReference type="Rhea" id="RHEA:24608"/>
        <dbReference type="ChEBI" id="CHEBI:15377"/>
        <dbReference type="ChEBI" id="CHEBI:15378"/>
        <dbReference type="ChEBI" id="CHEBI:16526"/>
        <dbReference type="ChEBI" id="CHEBI:42819"/>
        <dbReference type="ChEBI" id="CHEBI:58136"/>
        <dbReference type="EC" id="4.2.1.41"/>
    </reaction>
</comment>
<comment type="pathway">
    <text evidence="1">Carbohydrate acid metabolism; D-glucarate degradation; 2,5-dioxopentanoate from D-glucarate: step 2/2.</text>
</comment>
<comment type="similarity">
    <text evidence="1">Belongs to the DapA family.</text>
</comment>
<keyword id="KW-0456">Lyase</keyword>
<accession>B1J9C7</accession>
<reference key="1">
    <citation type="submission" date="2008-02" db="EMBL/GenBank/DDBJ databases">
        <title>Complete sequence of Pseudomonas putida W619.</title>
        <authorList>
            <person name="Copeland A."/>
            <person name="Lucas S."/>
            <person name="Lapidus A."/>
            <person name="Barry K."/>
            <person name="Detter J.C."/>
            <person name="Glavina del Rio T."/>
            <person name="Dalin E."/>
            <person name="Tice H."/>
            <person name="Pitluck S."/>
            <person name="Chain P."/>
            <person name="Malfatti S."/>
            <person name="Shin M."/>
            <person name="Vergez L."/>
            <person name="Schmutz J."/>
            <person name="Larimer F."/>
            <person name="Land M."/>
            <person name="Hauser L."/>
            <person name="Kyrpides N."/>
            <person name="Kim E."/>
            <person name="Taghavi S."/>
            <person name="Vangronsveld D."/>
            <person name="van der Lelie D."/>
            <person name="Richardson P."/>
        </authorList>
    </citation>
    <scope>NUCLEOTIDE SEQUENCE [LARGE SCALE GENOMIC DNA]</scope>
    <source>
        <strain>W619</strain>
    </source>
</reference>
<sequence>MNPQELKSILSHGLLSFPVTDFNAQGDFNQAGYIKRLEWLAPYGASALFAAGGTGEFFSLAASEYSQVIKTAVDTCAKSVPILAGVGGSTRQAIEYAQEAERLGAKGLLLLPHYLTEASQDGVAAHVEAVCKSVNIGVVVYNRNVCRLNADLLEKLAERCPNLIGYKDGLGDIELMVSIRRRLGDRFSYLGGLPTAEVYAAAYKALGVPVYSSAVFNFIPKTAMDFYHAIARDDHATVGKLIDDFFLPYLDIRNRKAGYAVSIVKAGAKIAGYDAGPVRTPLTDLTAEEYEMLAALMDKMGPQ</sequence>
<evidence type="ECO:0000255" key="1">
    <source>
        <dbReference type="HAMAP-Rule" id="MF_00694"/>
    </source>
</evidence>